<gene>
    <name evidence="1" type="primary">bioD</name>
    <name type="ordered locus">WS0335</name>
</gene>
<accession>Q7MAC6</accession>
<comment type="function">
    <text evidence="1">Catalyzes a mechanistically unusual reaction, the ATP-dependent insertion of CO2 between the N7 and N8 nitrogen atoms of 7,8-diaminopelargonic acid (DAPA, also called 7,8-diammoniononanoate) to form a ureido ring.</text>
</comment>
<comment type="catalytic activity">
    <reaction evidence="1">
        <text>(7R,8S)-7,8-diammoniononanoate + CO2 + ATP = (4R,5S)-dethiobiotin + ADP + phosphate + 3 H(+)</text>
        <dbReference type="Rhea" id="RHEA:15805"/>
        <dbReference type="ChEBI" id="CHEBI:15378"/>
        <dbReference type="ChEBI" id="CHEBI:16526"/>
        <dbReference type="ChEBI" id="CHEBI:30616"/>
        <dbReference type="ChEBI" id="CHEBI:43474"/>
        <dbReference type="ChEBI" id="CHEBI:149469"/>
        <dbReference type="ChEBI" id="CHEBI:149473"/>
        <dbReference type="ChEBI" id="CHEBI:456216"/>
        <dbReference type="EC" id="6.3.3.3"/>
    </reaction>
</comment>
<comment type="cofactor">
    <cofactor evidence="1">
        <name>Mg(2+)</name>
        <dbReference type="ChEBI" id="CHEBI:18420"/>
    </cofactor>
</comment>
<comment type="pathway">
    <text evidence="1">Cofactor biosynthesis; biotin biosynthesis; biotin from 7,8-diaminononanoate: step 1/2.</text>
</comment>
<comment type="subunit">
    <text evidence="1">Homodimer.</text>
</comment>
<comment type="subcellular location">
    <subcellularLocation>
        <location evidence="1">Cytoplasm</location>
    </subcellularLocation>
</comment>
<comment type="similarity">
    <text evidence="1">Belongs to the dethiobiotin synthetase family.</text>
</comment>
<feature type="chain" id="PRO_0000302553" description="ATP-dependent dethiobiotin synthetase BioD">
    <location>
        <begin position="1"/>
        <end position="216"/>
    </location>
</feature>
<feature type="active site" evidence="1">
    <location>
        <position position="37"/>
    </location>
</feature>
<feature type="binding site" evidence="1">
    <location>
        <begin position="12"/>
        <end position="17"/>
    </location>
    <ligand>
        <name>ATP</name>
        <dbReference type="ChEBI" id="CHEBI:30616"/>
    </ligand>
</feature>
<feature type="binding site" evidence="1">
    <location>
        <position position="16"/>
    </location>
    <ligand>
        <name>Mg(2+)</name>
        <dbReference type="ChEBI" id="CHEBI:18420"/>
    </ligand>
</feature>
<feature type="binding site" evidence="1">
    <location>
        <position position="41"/>
    </location>
    <ligand>
        <name>substrate</name>
    </ligand>
</feature>
<feature type="binding site" evidence="1">
    <location>
        <position position="53"/>
    </location>
    <ligand>
        <name>Mg(2+)</name>
        <dbReference type="ChEBI" id="CHEBI:18420"/>
    </ligand>
</feature>
<feature type="binding site" evidence="1">
    <location>
        <begin position="115"/>
        <end position="118"/>
    </location>
    <ligand>
        <name>ATP</name>
        <dbReference type="ChEBI" id="CHEBI:30616"/>
    </ligand>
</feature>
<feature type="binding site" evidence="1">
    <location>
        <position position="115"/>
    </location>
    <ligand>
        <name>Mg(2+)</name>
        <dbReference type="ChEBI" id="CHEBI:18420"/>
    </ligand>
</feature>
<organism>
    <name type="scientific">Wolinella succinogenes (strain ATCC 29543 / DSM 1740 / CCUG 13145 / JCM 31913 / LMG 7466 / NCTC 11488 / FDC 602W)</name>
    <name type="common">Vibrio succinogenes</name>
    <dbReference type="NCBI Taxonomy" id="273121"/>
    <lineage>
        <taxon>Bacteria</taxon>
        <taxon>Pseudomonadati</taxon>
        <taxon>Campylobacterota</taxon>
        <taxon>Epsilonproteobacteria</taxon>
        <taxon>Campylobacterales</taxon>
        <taxon>Helicobacteraceae</taxon>
        <taxon>Wolinella</taxon>
    </lineage>
</organism>
<name>BIOD_WOLSU</name>
<proteinExistence type="inferred from homology"/>
<reference key="1">
    <citation type="journal article" date="2003" name="Proc. Natl. Acad. Sci. U.S.A.">
        <title>Complete genome sequence and analysis of Wolinella succinogenes.</title>
        <authorList>
            <person name="Baar C."/>
            <person name="Eppinger M."/>
            <person name="Raddatz G."/>
            <person name="Simon J."/>
            <person name="Lanz C."/>
            <person name="Klimmek O."/>
            <person name="Nandakumar R."/>
            <person name="Gross R."/>
            <person name="Rosinus A."/>
            <person name="Keller H."/>
            <person name="Jagtap P."/>
            <person name="Linke B."/>
            <person name="Meyer F."/>
            <person name="Lederer H."/>
            <person name="Schuster S.C."/>
        </authorList>
    </citation>
    <scope>NUCLEOTIDE SEQUENCE [LARGE SCALE GENOMIC DNA]</scope>
    <source>
        <strain>ATCC 29543 / DSM 1740 / CCUG 13145 / JCM 31913 / LMG 7466 / NCTC 11488 / FDC 602W</strain>
    </source>
</reference>
<dbReference type="EC" id="6.3.3.3" evidence="1"/>
<dbReference type="EMBL" id="BX571657">
    <property type="protein sequence ID" value="CAE09485.1"/>
    <property type="molecule type" value="Genomic_DNA"/>
</dbReference>
<dbReference type="RefSeq" id="WP_011138285.1">
    <property type="nucleotide sequence ID" value="NC_005090.1"/>
</dbReference>
<dbReference type="SMR" id="Q7MAC6"/>
<dbReference type="STRING" id="273121.WS0335"/>
<dbReference type="KEGG" id="wsu:WS0335"/>
<dbReference type="eggNOG" id="COG0132">
    <property type="taxonomic scope" value="Bacteria"/>
</dbReference>
<dbReference type="HOGENOM" id="CLU_072551_3_2_7"/>
<dbReference type="UniPathway" id="UPA00078">
    <property type="reaction ID" value="UER00161"/>
</dbReference>
<dbReference type="Proteomes" id="UP000000422">
    <property type="component" value="Chromosome"/>
</dbReference>
<dbReference type="GO" id="GO:0005829">
    <property type="term" value="C:cytosol"/>
    <property type="evidence" value="ECO:0007669"/>
    <property type="project" value="TreeGrafter"/>
</dbReference>
<dbReference type="GO" id="GO:0005524">
    <property type="term" value="F:ATP binding"/>
    <property type="evidence" value="ECO:0007669"/>
    <property type="project" value="UniProtKB-UniRule"/>
</dbReference>
<dbReference type="GO" id="GO:0004141">
    <property type="term" value="F:dethiobiotin synthase activity"/>
    <property type="evidence" value="ECO:0007669"/>
    <property type="project" value="UniProtKB-UniRule"/>
</dbReference>
<dbReference type="GO" id="GO:0000287">
    <property type="term" value="F:magnesium ion binding"/>
    <property type="evidence" value="ECO:0007669"/>
    <property type="project" value="UniProtKB-UniRule"/>
</dbReference>
<dbReference type="GO" id="GO:0009102">
    <property type="term" value="P:biotin biosynthetic process"/>
    <property type="evidence" value="ECO:0007669"/>
    <property type="project" value="UniProtKB-UniRule"/>
</dbReference>
<dbReference type="CDD" id="cd03109">
    <property type="entry name" value="DTBS"/>
    <property type="match status" value="1"/>
</dbReference>
<dbReference type="Gene3D" id="3.40.50.300">
    <property type="entry name" value="P-loop containing nucleotide triphosphate hydrolases"/>
    <property type="match status" value="1"/>
</dbReference>
<dbReference type="HAMAP" id="MF_00336">
    <property type="entry name" value="BioD"/>
    <property type="match status" value="1"/>
</dbReference>
<dbReference type="InterPro" id="IPR004472">
    <property type="entry name" value="DTB_synth_BioD"/>
</dbReference>
<dbReference type="InterPro" id="IPR027417">
    <property type="entry name" value="P-loop_NTPase"/>
</dbReference>
<dbReference type="NCBIfam" id="TIGR00347">
    <property type="entry name" value="bioD"/>
    <property type="match status" value="1"/>
</dbReference>
<dbReference type="PANTHER" id="PTHR43210:SF2">
    <property type="entry name" value="ATP-DEPENDENT DETHIOBIOTIN SYNTHETASE BIOD 2"/>
    <property type="match status" value="1"/>
</dbReference>
<dbReference type="PANTHER" id="PTHR43210">
    <property type="entry name" value="DETHIOBIOTIN SYNTHETASE"/>
    <property type="match status" value="1"/>
</dbReference>
<dbReference type="Pfam" id="PF13500">
    <property type="entry name" value="AAA_26"/>
    <property type="match status" value="1"/>
</dbReference>
<dbReference type="PIRSF" id="PIRSF006755">
    <property type="entry name" value="DTB_synth"/>
    <property type="match status" value="1"/>
</dbReference>
<dbReference type="SUPFAM" id="SSF52540">
    <property type="entry name" value="P-loop containing nucleoside triphosphate hydrolases"/>
    <property type="match status" value="1"/>
</dbReference>
<sequence>MKPLFISATGTGVGKSYTTQKLLQSLHQSGRKPLALKPIETGANPTPEDALLHLQLMQKLQLDQGLSLEEICLERYKLPASPWVSAKKEGRCVDVDHLLRRLLEFQKRSDPLLIEGAGGLLVPLLKEYFMIDLAEALEAHMVLVISGKLGGINEALLSLEALQHRQMSYTLVLNLWEEEKRSFEEISAPYWKERPERLFRLDSELEELTQTLLSAI</sequence>
<evidence type="ECO:0000255" key="1">
    <source>
        <dbReference type="HAMAP-Rule" id="MF_00336"/>
    </source>
</evidence>
<protein>
    <recommendedName>
        <fullName evidence="1">ATP-dependent dethiobiotin synthetase BioD</fullName>
        <ecNumber evidence="1">6.3.3.3</ecNumber>
    </recommendedName>
    <alternativeName>
        <fullName evidence="1">DTB synthetase</fullName>
        <shortName evidence="1">DTBS</shortName>
    </alternativeName>
    <alternativeName>
        <fullName evidence="1">Dethiobiotin synthase</fullName>
    </alternativeName>
</protein>
<keyword id="KW-0067">ATP-binding</keyword>
<keyword id="KW-0093">Biotin biosynthesis</keyword>
<keyword id="KW-0963">Cytoplasm</keyword>
<keyword id="KW-0436">Ligase</keyword>
<keyword id="KW-0460">Magnesium</keyword>
<keyword id="KW-0479">Metal-binding</keyword>
<keyword id="KW-0547">Nucleotide-binding</keyword>
<keyword id="KW-1185">Reference proteome</keyword>